<name>LFTR_YERPG</name>
<protein>
    <recommendedName>
        <fullName evidence="1">Leucyl/phenylalanyl-tRNA--protein transferase</fullName>
        <ecNumber evidence="1">2.3.2.6</ecNumber>
    </recommendedName>
    <alternativeName>
        <fullName evidence="1">L/F-transferase</fullName>
    </alternativeName>
    <alternativeName>
        <fullName evidence="1">Leucyltransferase</fullName>
    </alternativeName>
    <alternativeName>
        <fullName evidence="1">Phenyalanyltransferase</fullName>
    </alternativeName>
</protein>
<gene>
    <name evidence="1" type="primary">aat</name>
    <name type="ordered locus">YpAngola_A1604</name>
</gene>
<reference key="1">
    <citation type="journal article" date="2010" name="J. Bacteriol.">
        <title>Genome sequence of the deep-rooted Yersinia pestis strain Angola reveals new insights into the evolution and pangenome of the plague bacterium.</title>
        <authorList>
            <person name="Eppinger M."/>
            <person name="Worsham P.L."/>
            <person name="Nikolich M.P."/>
            <person name="Riley D.R."/>
            <person name="Sebastian Y."/>
            <person name="Mou S."/>
            <person name="Achtman M."/>
            <person name="Lindler L.E."/>
            <person name="Ravel J."/>
        </authorList>
    </citation>
    <scope>NUCLEOTIDE SEQUENCE [LARGE SCALE GENOMIC DNA]</scope>
    <source>
        <strain>Angola</strain>
    </source>
</reference>
<sequence length="236" mass="26403">MRVTQLSSQSFIFPSPELALREPNGLLALGGDLTAPRLLAAYQRGIFPWFNPGEMILWWSPDPRAVLFPEDLHISRSMRRFIRHCPYRFTLNHAFADVISACATERDEGTWIGRDVQQAYCQLHALGHAHSLEVWLENELVGGLYGVAVGAVFCGESMFSRADNASKSALMVFCHHFTQHGGELIDCQVLNAHTASLGAVEIPRNFFLQQLSQLQFSPLPAECWLPQSLNFSSAMQ</sequence>
<accession>A9R4Y8</accession>
<proteinExistence type="inferred from homology"/>
<evidence type="ECO:0000255" key="1">
    <source>
        <dbReference type="HAMAP-Rule" id="MF_00688"/>
    </source>
</evidence>
<dbReference type="EC" id="2.3.2.6" evidence="1"/>
<dbReference type="EMBL" id="CP000901">
    <property type="protein sequence ID" value="ABX86926.1"/>
    <property type="molecule type" value="Genomic_DNA"/>
</dbReference>
<dbReference type="RefSeq" id="WP_002211346.1">
    <property type="nucleotide sequence ID" value="NZ_CP009935.1"/>
</dbReference>
<dbReference type="SMR" id="A9R4Y8"/>
<dbReference type="GeneID" id="57977167"/>
<dbReference type="KEGG" id="ypg:YpAngola_A1604"/>
<dbReference type="PATRIC" id="fig|349746.12.peg.2571"/>
<dbReference type="GO" id="GO:0005737">
    <property type="term" value="C:cytoplasm"/>
    <property type="evidence" value="ECO:0007669"/>
    <property type="project" value="UniProtKB-SubCell"/>
</dbReference>
<dbReference type="GO" id="GO:0008914">
    <property type="term" value="F:leucyl-tRNA--protein transferase activity"/>
    <property type="evidence" value="ECO:0007669"/>
    <property type="project" value="UniProtKB-UniRule"/>
</dbReference>
<dbReference type="GO" id="GO:0030163">
    <property type="term" value="P:protein catabolic process"/>
    <property type="evidence" value="ECO:0007669"/>
    <property type="project" value="UniProtKB-UniRule"/>
</dbReference>
<dbReference type="FunFam" id="3.30.70.3550:FF:000001">
    <property type="entry name" value="Leucyl/phenylalanyl-tRNA--protein transferase"/>
    <property type="match status" value="1"/>
</dbReference>
<dbReference type="FunFam" id="3.40.630.70:FF:000001">
    <property type="entry name" value="Leucyl/phenylalanyl-tRNA--protein transferase"/>
    <property type="match status" value="1"/>
</dbReference>
<dbReference type="Gene3D" id="3.40.630.70">
    <property type="entry name" value="Leucyl/phenylalanyl-tRNA-protein transferase, C-terminal domain"/>
    <property type="match status" value="1"/>
</dbReference>
<dbReference type="Gene3D" id="3.30.70.3550">
    <property type="entry name" value="Leucyl/phenylalanyl-tRNA-protein transferase, N-terminal domain"/>
    <property type="match status" value="1"/>
</dbReference>
<dbReference type="HAMAP" id="MF_00688">
    <property type="entry name" value="Leu_Phe_trans"/>
    <property type="match status" value="1"/>
</dbReference>
<dbReference type="InterPro" id="IPR016181">
    <property type="entry name" value="Acyl_CoA_acyltransferase"/>
</dbReference>
<dbReference type="InterPro" id="IPR004616">
    <property type="entry name" value="Leu/Phe-tRNA_Trfase"/>
</dbReference>
<dbReference type="InterPro" id="IPR042203">
    <property type="entry name" value="Leu/Phe-tRNA_Trfase_C"/>
</dbReference>
<dbReference type="InterPro" id="IPR042221">
    <property type="entry name" value="Leu/Phe-tRNA_Trfase_N"/>
</dbReference>
<dbReference type="NCBIfam" id="TIGR00667">
    <property type="entry name" value="aat"/>
    <property type="match status" value="1"/>
</dbReference>
<dbReference type="PANTHER" id="PTHR30098">
    <property type="entry name" value="LEUCYL/PHENYLALANYL-TRNA--PROTEIN TRANSFERASE"/>
    <property type="match status" value="1"/>
</dbReference>
<dbReference type="PANTHER" id="PTHR30098:SF2">
    <property type="entry name" value="LEUCYL_PHENYLALANYL-TRNA--PROTEIN TRANSFERASE"/>
    <property type="match status" value="1"/>
</dbReference>
<dbReference type="Pfam" id="PF03588">
    <property type="entry name" value="Leu_Phe_trans"/>
    <property type="match status" value="1"/>
</dbReference>
<dbReference type="SUPFAM" id="SSF55729">
    <property type="entry name" value="Acyl-CoA N-acyltransferases (Nat)"/>
    <property type="match status" value="1"/>
</dbReference>
<comment type="function">
    <text evidence="1">Functions in the N-end rule pathway of protein degradation where it conjugates Leu, Phe and, less efficiently, Met from aminoacyl-tRNAs to the N-termini of proteins containing an N-terminal arginine or lysine.</text>
</comment>
<comment type="catalytic activity">
    <reaction evidence="1">
        <text>N-terminal L-lysyl-[protein] + L-leucyl-tRNA(Leu) = N-terminal L-leucyl-L-lysyl-[protein] + tRNA(Leu) + H(+)</text>
        <dbReference type="Rhea" id="RHEA:12340"/>
        <dbReference type="Rhea" id="RHEA-COMP:9613"/>
        <dbReference type="Rhea" id="RHEA-COMP:9622"/>
        <dbReference type="Rhea" id="RHEA-COMP:12670"/>
        <dbReference type="Rhea" id="RHEA-COMP:12671"/>
        <dbReference type="ChEBI" id="CHEBI:15378"/>
        <dbReference type="ChEBI" id="CHEBI:65249"/>
        <dbReference type="ChEBI" id="CHEBI:78442"/>
        <dbReference type="ChEBI" id="CHEBI:78494"/>
        <dbReference type="ChEBI" id="CHEBI:133043"/>
        <dbReference type="EC" id="2.3.2.6"/>
    </reaction>
</comment>
<comment type="catalytic activity">
    <reaction evidence="1">
        <text>N-terminal L-arginyl-[protein] + L-leucyl-tRNA(Leu) = N-terminal L-leucyl-L-arginyl-[protein] + tRNA(Leu) + H(+)</text>
        <dbReference type="Rhea" id="RHEA:50416"/>
        <dbReference type="Rhea" id="RHEA-COMP:9613"/>
        <dbReference type="Rhea" id="RHEA-COMP:9622"/>
        <dbReference type="Rhea" id="RHEA-COMP:12672"/>
        <dbReference type="Rhea" id="RHEA-COMP:12673"/>
        <dbReference type="ChEBI" id="CHEBI:15378"/>
        <dbReference type="ChEBI" id="CHEBI:64719"/>
        <dbReference type="ChEBI" id="CHEBI:78442"/>
        <dbReference type="ChEBI" id="CHEBI:78494"/>
        <dbReference type="ChEBI" id="CHEBI:133044"/>
        <dbReference type="EC" id="2.3.2.6"/>
    </reaction>
</comment>
<comment type="catalytic activity">
    <reaction evidence="1">
        <text>L-phenylalanyl-tRNA(Phe) + an N-terminal L-alpha-aminoacyl-[protein] = an N-terminal L-phenylalanyl-L-alpha-aminoacyl-[protein] + tRNA(Phe)</text>
        <dbReference type="Rhea" id="RHEA:43632"/>
        <dbReference type="Rhea" id="RHEA-COMP:9668"/>
        <dbReference type="Rhea" id="RHEA-COMP:9699"/>
        <dbReference type="Rhea" id="RHEA-COMP:10636"/>
        <dbReference type="Rhea" id="RHEA-COMP:10637"/>
        <dbReference type="ChEBI" id="CHEBI:78442"/>
        <dbReference type="ChEBI" id="CHEBI:78531"/>
        <dbReference type="ChEBI" id="CHEBI:78597"/>
        <dbReference type="ChEBI" id="CHEBI:83561"/>
        <dbReference type="EC" id="2.3.2.6"/>
    </reaction>
</comment>
<comment type="subcellular location">
    <subcellularLocation>
        <location evidence="1">Cytoplasm</location>
    </subcellularLocation>
</comment>
<comment type="similarity">
    <text evidence="1">Belongs to the L/F-transferase family.</text>
</comment>
<feature type="chain" id="PRO_1000131961" description="Leucyl/phenylalanyl-tRNA--protein transferase">
    <location>
        <begin position="1"/>
        <end position="236"/>
    </location>
</feature>
<organism>
    <name type="scientific">Yersinia pestis bv. Antiqua (strain Angola)</name>
    <dbReference type="NCBI Taxonomy" id="349746"/>
    <lineage>
        <taxon>Bacteria</taxon>
        <taxon>Pseudomonadati</taxon>
        <taxon>Pseudomonadota</taxon>
        <taxon>Gammaproteobacteria</taxon>
        <taxon>Enterobacterales</taxon>
        <taxon>Yersiniaceae</taxon>
        <taxon>Yersinia</taxon>
    </lineage>
</organism>
<keyword id="KW-0012">Acyltransferase</keyword>
<keyword id="KW-0963">Cytoplasm</keyword>
<keyword id="KW-0808">Transferase</keyword>